<organism>
    <name type="scientific">Cebus imitator</name>
    <name type="common">Panamanian white-faced capuchin</name>
    <name type="synonym">Cebus capucinus imitator</name>
    <dbReference type="NCBI Taxonomy" id="2715852"/>
    <lineage>
        <taxon>Eukaryota</taxon>
        <taxon>Metazoa</taxon>
        <taxon>Chordata</taxon>
        <taxon>Craniata</taxon>
        <taxon>Vertebrata</taxon>
        <taxon>Euteleostomi</taxon>
        <taxon>Mammalia</taxon>
        <taxon>Eutheria</taxon>
        <taxon>Euarchontoglires</taxon>
        <taxon>Primates</taxon>
        <taxon>Haplorrhini</taxon>
        <taxon>Platyrrhini</taxon>
        <taxon>Cebidae</taxon>
        <taxon>Cebinae</taxon>
        <taxon>Cebus</taxon>
    </lineage>
</organism>
<feature type="signal peptide" evidence="6">
    <location>
        <begin position="1"/>
        <end position="18"/>
    </location>
</feature>
<feature type="chain" id="PRO_5014391587" description="Apolipoprotein A-I">
    <location>
        <begin position="19"/>
        <end position="267"/>
    </location>
</feature>
<feature type="chain" id="PRO_0000451963" description="Proapolipoprotein A-I">
    <location>
        <begin position="25"/>
        <end position="267"/>
    </location>
</feature>
<feature type="chain" id="PRO_0000451964" description="Truncated apolipoprotein A-I" evidence="3">
    <location>
        <begin position="25"/>
        <end position="266"/>
    </location>
</feature>
<feature type="repeat" description="1">
    <location>
        <begin position="68"/>
        <end position="89"/>
    </location>
</feature>
<feature type="repeat" description="2">
    <location>
        <begin position="90"/>
        <end position="111"/>
    </location>
</feature>
<feature type="repeat" description="3; half-length">
    <location>
        <begin position="112"/>
        <end position="122"/>
    </location>
</feature>
<feature type="repeat" description="4">
    <location>
        <begin position="123"/>
        <end position="144"/>
    </location>
</feature>
<feature type="repeat" description="5">
    <location>
        <begin position="145"/>
        <end position="166"/>
    </location>
</feature>
<feature type="repeat" description="6">
    <location>
        <begin position="167"/>
        <end position="188"/>
    </location>
</feature>
<feature type="repeat" description="7">
    <location>
        <begin position="189"/>
        <end position="210"/>
    </location>
</feature>
<feature type="repeat" description="8">
    <location>
        <begin position="211"/>
        <end position="232"/>
    </location>
</feature>
<feature type="repeat" description="9; half-length">
    <location>
        <begin position="233"/>
        <end position="243"/>
    </location>
</feature>
<feature type="repeat" description="10">
    <location>
        <begin position="244"/>
        <end position="267"/>
    </location>
</feature>
<feature type="region of interest" description="10 X approximate tandem repeats">
    <location>
        <begin position="68"/>
        <end position="267"/>
    </location>
</feature>
<feature type="modified residue" description="Methionine sulfoxide" evidence="3">
    <location>
        <position position="110"/>
    </location>
</feature>
<sequence length="267" mass="30548">MKAAVLTLAVLFLTGSQARHFWQQDEPPQSPWDRVKDLATVYVDSVKDSGRDYVSQFESSALGKQLNLKLLDNWDSLTSTVNKLREDLGPVTQEFWDNLEKETGWLRQEMSKDLEEVKAKVQPYLDDFQKKWQEEVKLYSQKLEPLRTEFQEGALQKLQDLQEKLSPLAEQVRDRARAHVDTLRTQLAPYSDELRQRLATRLEVLKESGGASLAEYHAKASEHLSALGEKAKPALEDLRQGLLPVLESFKVSFLSALEEYAKKLSSQ</sequence>
<protein>
    <recommendedName>
        <fullName>Apolipoprotein A-I</fullName>
        <shortName>Apo-AI</shortName>
        <shortName>ApoA-I</shortName>
    </recommendedName>
    <alternativeName>
        <fullName>Apolipoprotein A1</fullName>
    </alternativeName>
    <component>
        <recommendedName>
            <fullName>Proapolipoprotein A-I</fullName>
            <shortName>ProapoA-I</shortName>
        </recommendedName>
    </component>
    <component>
        <recommendedName>
            <fullName>Truncated apolipoprotein A-I</fullName>
        </recommendedName>
    </component>
</protein>
<accession>A0A2K5QCI5</accession>
<reference key="1">
    <citation type="submission" date="2016-03" db="EMBL/GenBank/DDBJ databases">
        <authorList>
            <person name="Warren W.C."/>
            <person name="Melin A.D."/>
        </authorList>
    </citation>
    <scope>NUCLEOTIDE SEQUENCE [LARGE SCALE GENOMIC DNA]</scope>
</reference>
<reference key="2">
    <citation type="unpublished observations" date="2020-10">
        <authorList>
            <person name="Puppione D.L."/>
        </authorList>
    </citation>
    <scope>IDENTIFICATION</scope>
</reference>
<proteinExistence type="inferred from homology"/>
<name>APOA1_CEBIM</name>
<gene>
    <name type="primary">APOA1</name>
</gene>
<dbReference type="RefSeq" id="XP_017378829.1">
    <property type="nucleotide sequence ID" value="XM_017523340.2"/>
</dbReference>
<dbReference type="RefSeq" id="XP_017378830.1">
    <property type="nucleotide sequence ID" value="XM_017523341.1"/>
</dbReference>
<dbReference type="SMR" id="A0A2K5QCI5"/>
<dbReference type="STRING" id="9516.ENSCCAP00000013613"/>
<dbReference type="Ensembl" id="ENSCCAT00000031045.1">
    <property type="protein sequence ID" value="ENSCCAP00000013613.1"/>
    <property type="gene ID" value="ENSCCAG00000024621.1"/>
</dbReference>
<dbReference type="GeneID" id="108300558"/>
<dbReference type="OMA" id="EYVAQFE"/>
<dbReference type="Proteomes" id="UP000233040">
    <property type="component" value="Unassembled WGS sequence"/>
</dbReference>
<dbReference type="GO" id="GO:0042627">
    <property type="term" value="C:chylomicron"/>
    <property type="evidence" value="ECO:0007669"/>
    <property type="project" value="TreeGrafter"/>
</dbReference>
<dbReference type="GO" id="GO:0030139">
    <property type="term" value="C:endocytic vesicle"/>
    <property type="evidence" value="ECO:0007669"/>
    <property type="project" value="Ensembl"/>
</dbReference>
<dbReference type="GO" id="GO:1903561">
    <property type="term" value="C:extracellular vesicle"/>
    <property type="evidence" value="ECO:0007669"/>
    <property type="project" value="TreeGrafter"/>
</dbReference>
<dbReference type="GO" id="GO:0034362">
    <property type="term" value="C:low-density lipoprotein particle"/>
    <property type="evidence" value="ECO:0007669"/>
    <property type="project" value="TreeGrafter"/>
</dbReference>
<dbReference type="GO" id="GO:0034366">
    <property type="term" value="C:spherical high-density lipoprotein particle"/>
    <property type="evidence" value="ECO:0007669"/>
    <property type="project" value="Ensembl"/>
</dbReference>
<dbReference type="GO" id="GO:0034361">
    <property type="term" value="C:very-low-density lipoprotein particle"/>
    <property type="evidence" value="ECO:0007669"/>
    <property type="project" value="Ensembl"/>
</dbReference>
<dbReference type="GO" id="GO:0001540">
    <property type="term" value="F:amyloid-beta binding"/>
    <property type="evidence" value="ECO:0007669"/>
    <property type="project" value="Ensembl"/>
</dbReference>
<dbReference type="GO" id="GO:0034191">
    <property type="term" value="F:apolipoprotein A-I receptor binding"/>
    <property type="evidence" value="ECO:0007669"/>
    <property type="project" value="Ensembl"/>
</dbReference>
<dbReference type="GO" id="GO:0045499">
    <property type="term" value="F:chemorepellent activity"/>
    <property type="evidence" value="ECO:0007669"/>
    <property type="project" value="Ensembl"/>
</dbReference>
<dbReference type="GO" id="GO:0015485">
    <property type="term" value="F:cholesterol binding"/>
    <property type="evidence" value="ECO:0007669"/>
    <property type="project" value="Ensembl"/>
</dbReference>
<dbReference type="GO" id="GO:0120020">
    <property type="term" value="F:cholesterol transfer activity"/>
    <property type="evidence" value="ECO:0007669"/>
    <property type="project" value="Ensembl"/>
</dbReference>
<dbReference type="GO" id="GO:0019899">
    <property type="term" value="F:enzyme binding"/>
    <property type="evidence" value="ECO:0007669"/>
    <property type="project" value="Ensembl"/>
</dbReference>
<dbReference type="GO" id="GO:0031072">
    <property type="term" value="F:heat shock protein binding"/>
    <property type="evidence" value="ECO:0007669"/>
    <property type="project" value="Ensembl"/>
</dbReference>
<dbReference type="GO" id="GO:0008035">
    <property type="term" value="F:high-density lipoprotein particle binding"/>
    <property type="evidence" value="ECO:0007669"/>
    <property type="project" value="Ensembl"/>
</dbReference>
<dbReference type="GO" id="GO:0070653">
    <property type="term" value="F:high-density lipoprotein particle receptor binding"/>
    <property type="evidence" value="ECO:0007669"/>
    <property type="project" value="Ensembl"/>
</dbReference>
<dbReference type="GO" id="GO:0060228">
    <property type="term" value="F:phosphatidylcholine-sterol O-acyltransferase activator activity"/>
    <property type="evidence" value="ECO:0007669"/>
    <property type="project" value="Ensembl"/>
</dbReference>
<dbReference type="GO" id="GO:0005543">
    <property type="term" value="F:phospholipid binding"/>
    <property type="evidence" value="ECO:0007669"/>
    <property type="project" value="Ensembl"/>
</dbReference>
<dbReference type="GO" id="GO:0042803">
    <property type="term" value="F:protein homodimerization activity"/>
    <property type="evidence" value="ECO:0000250"/>
    <property type="project" value="UniProtKB"/>
</dbReference>
<dbReference type="GO" id="GO:0030325">
    <property type="term" value="P:adrenal gland development"/>
    <property type="evidence" value="ECO:0007669"/>
    <property type="project" value="Ensembl"/>
</dbReference>
<dbReference type="GO" id="GO:0034205">
    <property type="term" value="P:amyloid-beta formation"/>
    <property type="evidence" value="ECO:0007669"/>
    <property type="project" value="Ensembl"/>
</dbReference>
<dbReference type="GO" id="GO:0043534">
    <property type="term" value="P:blood vessel endothelial cell migration"/>
    <property type="evidence" value="ECO:0007669"/>
    <property type="project" value="Ensembl"/>
</dbReference>
<dbReference type="GO" id="GO:0071402">
    <property type="term" value="P:cellular response to lipoprotein particle stimulus"/>
    <property type="evidence" value="ECO:0007669"/>
    <property type="project" value="Ensembl"/>
</dbReference>
<dbReference type="GO" id="GO:0006695">
    <property type="term" value="P:cholesterol biosynthetic process"/>
    <property type="evidence" value="ECO:0007669"/>
    <property type="project" value="Ensembl"/>
</dbReference>
<dbReference type="GO" id="GO:0033344">
    <property type="term" value="P:cholesterol efflux"/>
    <property type="evidence" value="ECO:0007669"/>
    <property type="project" value="Ensembl"/>
</dbReference>
<dbReference type="GO" id="GO:0042632">
    <property type="term" value="P:cholesterol homeostasis"/>
    <property type="evidence" value="ECO:0007669"/>
    <property type="project" value="Ensembl"/>
</dbReference>
<dbReference type="GO" id="GO:0070508">
    <property type="term" value="P:cholesterol import"/>
    <property type="evidence" value="ECO:0007669"/>
    <property type="project" value="Ensembl"/>
</dbReference>
<dbReference type="GO" id="GO:0001935">
    <property type="term" value="P:endothelial cell proliferation"/>
    <property type="evidence" value="ECO:0007669"/>
    <property type="project" value="Ensembl"/>
</dbReference>
<dbReference type="GO" id="GO:0007186">
    <property type="term" value="P:G protein-coupled receptor signaling pathway"/>
    <property type="evidence" value="ECO:0007669"/>
    <property type="project" value="Ensembl"/>
</dbReference>
<dbReference type="GO" id="GO:0008211">
    <property type="term" value="P:glucocorticoid metabolic process"/>
    <property type="evidence" value="ECO:0007669"/>
    <property type="project" value="Ensembl"/>
</dbReference>
<dbReference type="GO" id="GO:0034380">
    <property type="term" value="P:high-density lipoprotein particle assembly"/>
    <property type="evidence" value="ECO:0007669"/>
    <property type="project" value="Ensembl"/>
</dbReference>
<dbReference type="GO" id="GO:0034375">
    <property type="term" value="P:high-density lipoprotein particle remodeling"/>
    <property type="evidence" value="ECO:0007669"/>
    <property type="project" value="Ensembl"/>
</dbReference>
<dbReference type="GO" id="GO:0007229">
    <property type="term" value="P:integrin-mediated signaling pathway"/>
    <property type="evidence" value="ECO:0007669"/>
    <property type="project" value="Ensembl"/>
</dbReference>
<dbReference type="GO" id="GO:0019915">
    <property type="term" value="P:lipid storage"/>
    <property type="evidence" value="ECO:0007669"/>
    <property type="project" value="Ensembl"/>
</dbReference>
<dbReference type="GO" id="GO:0042158">
    <property type="term" value="P:lipoprotein biosynthetic process"/>
    <property type="evidence" value="ECO:0007669"/>
    <property type="project" value="Ensembl"/>
</dbReference>
<dbReference type="GO" id="GO:0060354">
    <property type="term" value="P:negative regulation of cell adhesion molecule production"/>
    <property type="evidence" value="ECO:0007669"/>
    <property type="project" value="Ensembl"/>
</dbReference>
<dbReference type="GO" id="GO:0002719">
    <property type="term" value="P:negative regulation of cytokine production involved in immune response"/>
    <property type="evidence" value="ECO:0007669"/>
    <property type="project" value="Ensembl"/>
</dbReference>
<dbReference type="GO" id="GO:0034115">
    <property type="term" value="P:negative regulation of heterotypic cell-cell adhesion"/>
    <property type="evidence" value="ECO:0007669"/>
    <property type="project" value="Ensembl"/>
</dbReference>
<dbReference type="GO" id="GO:0050728">
    <property type="term" value="P:negative regulation of inflammatory response"/>
    <property type="evidence" value="ECO:0007669"/>
    <property type="project" value="Ensembl"/>
</dbReference>
<dbReference type="GO" id="GO:0032691">
    <property type="term" value="P:negative regulation of interleukin-1 beta production"/>
    <property type="evidence" value="ECO:0007669"/>
    <property type="project" value="Ensembl"/>
</dbReference>
<dbReference type="GO" id="GO:0010804">
    <property type="term" value="P:negative regulation of tumor necrosis factor-mediated signaling pathway"/>
    <property type="evidence" value="ECO:0007669"/>
    <property type="project" value="Ensembl"/>
</dbReference>
<dbReference type="GO" id="GO:0010903">
    <property type="term" value="P:negative regulation of very-low-density lipoprotein particle remodeling"/>
    <property type="evidence" value="ECO:0007669"/>
    <property type="project" value="Ensembl"/>
</dbReference>
<dbReference type="GO" id="GO:0006656">
    <property type="term" value="P:phosphatidylcholine biosynthetic process"/>
    <property type="evidence" value="ECO:0007669"/>
    <property type="project" value="Ensembl"/>
</dbReference>
<dbReference type="GO" id="GO:0033700">
    <property type="term" value="P:phospholipid efflux"/>
    <property type="evidence" value="ECO:0007669"/>
    <property type="project" value="Ensembl"/>
</dbReference>
<dbReference type="GO" id="GO:0055091">
    <property type="term" value="P:phospholipid homeostasis"/>
    <property type="evidence" value="ECO:0007669"/>
    <property type="project" value="Ensembl"/>
</dbReference>
<dbReference type="GO" id="GO:0010875">
    <property type="term" value="P:positive regulation of cholesterol efflux"/>
    <property type="evidence" value="ECO:0007669"/>
    <property type="project" value="Ensembl"/>
</dbReference>
<dbReference type="GO" id="GO:0090205">
    <property type="term" value="P:positive regulation of cholesterol metabolic process"/>
    <property type="evidence" value="ECO:0007669"/>
    <property type="project" value="Ensembl"/>
</dbReference>
<dbReference type="GO" id="GO:0050766">
    <property type="term" value="P:positive regulation of phagocytosis"/>
    <property type="evidence" value="ECO:0007669"/>
    <property type="project" value="Ensembl"/>
</dbReference>
<dbReference type="GO" id="GO:1902995">
    <property type="term" value="P:positive regulation of phospholipid efflux"/>
    <property type="evidence" value="ECO:0007669"/>
    <property type="project" value="Ensembl"/>
</dbReference>
<dbReference type="GO" id="GO:0035025">
    <property type="term" value="P:positive regulation of Rho protein signal transduction"/>
    <property type="evidence" value="ECO:0007669"/>
    <property type="project" value="Ensembl"/>
</dbReference>
<dbReference type="GO" id="GO:0051496">
    <property type="term" value="P:positive regulation of stress fiber assembly"/>
    <property type="evidence" value="ECO:0007669"/>
    <property type="project" value="Ensembl"/>
</dbReference>
<dbReference type="GO" id="GO:1900026">
    <property type="term" value="P:positive regulation of substrate adhesion-dependent cell spreading"/>
    <property type="evidence" value="ECO:0007669"/>
    <property type="project" value="Ensembl"/>
</dbReference>
<dbReference type="GO" id="GO:0050821">
    <property type="term" value="P:protein stabilization"/>
    <property type="evidence" value="ECO:0007669"/>
    <property type="project" value="Ensembl"/>
</dbReference>
<dbReference type="GO" id="GO:0032489">
    <property type="term" value="P:regulation of Cdc42 protein signal transduction"/>
    <property type="evidence" value="ECO:0007669"/>
    <property type="project" value="Ensembl"/>
</dbReference>
<dbReference type="GO" id="GO:0030300">
    <property type="term" value="P:regulation of intestinal cholesterol absorption"/>
    <property type="evidence" value="ECO:0007669"/>
    <property type="project" value="Ensembl"/>
</dbReference>
<dbReference type="GO" id="GO:0043691">
    <property type="term" value="P:reverse cholesterol transport"/>
    <property type="evidence" value="ECO:0007669"/>
    <property type="project" value="Ensembl"/>
</dbReference>
<dbReference type="GO" id="GO:0070328">
    <property type="term" value="P:triglyceride homeostasis"/>
    <property type="evidence" value="ECO:0007669"/>
    <property type="project" value="Ensembl"/>
</dbReference>
<dbReference type="GO" id="GO:0051180">
    <property type="term" value="P:vitamin transport"/>
    <property type="evidence" value="ECO:0007669"/>
    <property type="project" value="Ensembl"/>
</dbReference>
<dbReference type="FunFam" id="1.20.120.20:FF:000001">
    <property type="entry name" value="Apolipoprotein A-I"/>
    <property type="match status" value="1"/>
</dbReference>
<dbReference type="FunFam" id="1.20.5.20:FF:000001">
    <property type="entry name" value="apolipoprotein A-I"/>
    <property type="match status" value="1"/>
</dbReference>
<dbReference type="Gene3D" id="1.20.5.20">
    <property type="match status" value="1"/>
</dbReference>
<dbReference type="Gene3D" id="6.10.140.380">
    <property type="match status" value="1"/>
</dbReference>
<dbReference type="Gene3D" id="1.20.120.20">
    <property type="entry name" value="Apolipoprotein"/>
    <property type="match status" value="1"/>
</dbReference>
<dbReference type="InterPro" id="IPR000074">
    <property type="entry name" value="ApoA_E"/>
</dbReference>
<dbReference type="InterPro" id="IPR050163">
    <property type="entry name" value="Apolipoprotein_A1/A4/E"/>
</dbReference>
<dbReference type="PANTHER" id="PTHR18976">
    <property type="entry name" value="APOLIPOPROTEIN"/>
    <property type="match status" value="1"/>
</dbReference>
<dbReference type="PANTHER" id="PTHR18976:SF11">
    <property type="entry name" value="APOLIPOPROTEIN A-I"/>
    <property type="match status" value="1"/>
</dbReference>
<dbReference type="Pfam" id="PF01442">
    <property type="entry name" value="Apolipoprotein"/>
    <property type="match status" value="1"/>
</dbReference>
<dbReference type="SUPFAM" id="SSF58113">
    <property type="entry name" value="Apolipoprotein A-I"/>
    <property type="match status" value="1"/>
</dbReference>
<comment type="function">
    <text evidence="3">Participates in the reverse transport of cholesterol from tissues to the liver for excretion by promoting cholesterol efflux from tissues and by acting as a cofactor for the lecithin cholesterol acyltransferase (LCAT). As part of the SPAP complex, activates spermatozoa motility.</text>
</comment>
<comment type="subunit">
    <text evidence="2 3 5">Homodimer (By similarity). Interacts with APOA1BP and CLU. Component of a sperm activating protein complex (SPAP), consisting of APOA1, an immunoglobulin heavy chain, an immunoglobulin light chain and albumin. Interacts with NDRG1. Interacts with SCGB3A2 (By similarity). Interacts with NAXE and YJEFN3 (By similarity).</text>
</comment>
<comment type="subcellular location">
    <subcellularLocation>
        <location evidence="3">Secreted</location>
    </subcellularLocation>
</comment>
<comment type="PTM">
    <text evidence="4">Glycosylated.</text>
</comment>
<comment type="PTM">
    <text evidence="4">Palmitoylated.</text>
</comment>
<comment type="PTM">
    <text evidence="1">Phosphorylation sites are present in the extracellular medium.</text>
</comment>
<comment type="similarity">
    <text evidence="7">Belongs to the apolipoprotein A1/A4/E family.</text>
</comment>
<evidence type="ECO:0000250" key="1"/>
<evidence type="ECO:0000250" key="2">
    <source>
        <dbReference type="UniProtKB" id="G5BQH5"/>
    </source>
</evidence>
<evidence type="ECO:0000250" key="3">
    <source>
        <dbReference type="UniProtKB" id="P02647"/>
    </source>
</evidence>
<evidence type="ECO:0000250" key="4">
    <source>
        <dbReference type="UniProtKB" id="P02648"/>
    </source>
</evidence>
<evidence type="ECO:0000250" key="5">
    <source>
        <dbReference type="UniProtKB" id="P04639"/>
    </source>
</evidence>
<evidence type="ECO:0000255" key="6"/>
<evidence type="ECO:0000305" key="7"/>
<keyword id="KW-0153">Cholesterol metabolism</keyword>
<keyword id="KW-0345">HDL</keyword>
<keyword id="KW-0443">Lipid metabolism</keyword>
<keyword id="KW-0445">Lipid transport</keyword>
<keyword id="KW-0449">Lipoprotein</keyword>
<keyword id="KW-0558">Oxidation</keyword>
<keyword id="KW-0564">Palmitate</keyword>
<keyword id="KW-0597">Phosphoprotein</keyword>
<keyword id="KW-1185">Reference proteome</keyword>
<keyword id="KW-0677">Repeat</keyword>
<keyword id="KW-0964">Secreted</keyword>
<keyword id="KW-0732">Signal</keyword>
<keyword id="KW-0753">Steroid metabolism</keyword>
<keyword id="KW-1207">Sterol metabolism</keyword>
<keyword id="KW-0813">Transport</keyword>